<gene>
    <name type="primary">rbcL</name>
</gene>
<reference key="1">
    <citation type="journal article" date="1994" name="Mol. Phylogenet. Evol.">
        <title>Molecular phylogeny of families related to Celastrales based on rbcL 5' flanking sequences.</title>
        <authorList>
            <person name="Savolainen V."/>
            <person name="Manen J.F."/>
            <person name="Douzery E.J.P."/>
            <person name="Spichiger R."/>
        </authorList>
    </citation>
    <scope>NUCLEOTIDE SEQUENCE [GENOMIC DNA]</scope>
</reference>
<geneLocation type="chloroplast"/>
<protein>
    <recommendedName>
        <fullName>Ribulose bisphosphate carboxylase large chain</fullName>
        <shortName>RuBisCO large subunit</shortName>
        <ecNumber>4.1.1.39</ecNumber>
    </recommendedName>
</protein>
<dbReference type="EC" id="4.1.1.39"/>
<dbReference type="EMBL" id="X69744">
    <property type="protein sequence ID" value="CAA49399.1"/>
    <property type="molecule type" value="Genomic_DNA"/>
</dbReference>
<dbReference type="PIR" id="S32706">
    <property type="entry name" value="S32706"/>
</dbReference>
<dbReference type="SMR" id="Q07049"/>
<dbReference type="GO" id="GO:0009507">
    <property type="term" value="C:chloroplast"/>
    <property type="evidence" value="ECO:0007669"/>
    <property type="project" value="UniProtKB-SubCell"/>
</dbReference>
<dbReference type="GO" id="GO:0004497">
    <property type="term" value="F:monooxygenase activity"/>
    <property type="evidence" value="ECO:0007669"/>
    <property type="project" value="UniProtKB-KW"/>
</dbReference>
<dbReference type="GO" id="GO:0016984">
    <property type="term" value="F:ribulose-bisphosphate carboxylase activity"/>
    <property type="evidence" value="ECO:0007669"/>
    <property type="project" value="UniProtKB-EC"/>
</dbReference>
<dbReference type="GO" id="GO:0009853">
    <property type="term" value="P:photorespiration"/>
    <property type="evidence" value="ECO:0007669"/>
    <property type="project" value="UniProtKB-KW"/>
</dbReference>
<dbReference type="GO" id="GO:0019253">
    <property type="term" value="P:reductive pentose-phosphate cycle"/>
    <property type="evidence" value="ECO:0007669"/>
    <property type="project" value="UniProtKB-KW"/>
</dbReference>
<dbReference type="Gene3D" id="3.30.70.150">
    <property type="entry name" value="RuBisCO large subunit, N-terminal domain"/>
    <property type="match status" value="1"/>
</dbReference>
<dbReference type="InterPro" id="IPR033966">
    <property type="entry name" value="RuBisCO"/>
</dbReference>
<dbReference type="InterPro" id="IPR017443">
    <property type="entry name" value="RuBisCO_lsu_fd_N"/>
</dbReference>
<dbReference type="InterPro" id="IPR036422">
    <property type="entry name" value="RuBisCO_lsu_N_sf"/>
</dbReference>
<dbReference type="PANTHER" id="PTHR42704">
    <property type="entry name" value="RIBULOSE BISPHOSPHATE CARBOXYLASE"/>
    <property type="match status" value="1"/>
</dbReference>
<dbReference type="PANTHER" id="PTHR42704:SF15">
    <property type="entry name" value="RIBULOSE BISPHOSPHATE CARBOXYLASE LARGE CHAIN"/>
    <property type="match status" value="1"/>
</dbReference>
<dbReference type="Pfam" id="PF02788">
    <property type="entry name" value="RuBisCO_large_N"/>
    <property type="match status" value="1"/>
</dbReference>
<dbReference type="SUPFAM" id="SSF54966">
    <property type="entry name" value="RuBisCO, large subunit, small (N-terminal) domain"/>
    <property type="match status" value="1"/>
</dbReference>
<proteinExistence type="inferred from homology"/>
<keyword id="KW-0007">Acetylation</keyword>
<keyword id="KW-0113">Calvin cycle</keyword>
<keyword id="KW-0120">Carbon dioxide fixation</keyword>
<keyword id="KW-0150">Chloroplast</keyword>
<keyword id="KW-0456">Lyase</keyword>
<keyword id="KW-0488">Methylation</keyword>
<keyword id="KW-0503">Monooxygenase</keyword>
<keyword id="KW-0560">Oxidoreductase</keyword>
<keyword id="KW-0601">Photorespiration</keyword>
<keyword id="KW-0602">Photosynthesis</keyword>
<keyword id="KW-0934">Plastid</keyword>
<organism>
    <name type="scientific">Ilex pernyi</name>
    <name type="common">Perny's holly</name>
    <dbReference type="NCBI Taxonomy" id="4300"/>
    <lineage>
        <taxon>Eukaryota</taxon>
        <taxon>Viridiplantae</taxon>
        <taxon>Streptophyta</taxon>
        <taxon>Embryophyta</taxon>
        <taxon>Tracheophyta</taxon>
        <taxon>Spermatophyta</taxon>
        <taxon>Magnoliopsida</taxon>
        <taxon>eudicotyledons</taxon>
        <taxon>Gunneridae</taxon>
        <taxon>Pentapetalae</taxon>
        <taxon>asterids</taxon>
        <taxon>campanulids</taxon>
        <taxon>Aquifoliales</taxon>
        <taxon>Aquifoliaceae</taxon>
        <taxon>Ilex</taxon>
    </lineage>
</organism>
<evidence type="ECO:0000250" key="1"/>
<evidence type="ECO:0000305" key="2"/>
<feature type="propeptide" id="PRO_0000031263" evidence="1">
    <location>
        <begin position="1"/>
        <end position="2"/>
    </location>
</feature>
<feature type="chain" id="PRO_0000031264" description="Ribulose bisphosphate carboxylase large chain">
    <location>
        <begin position="3"/>
        <end position="54" status="greater than"/>
    </location>
</feature>
<feature type="modified residue" description="N-acetylproline" evidence="1">
    <location>
        <position position="3"/>
    </location>
</feature>
<feature type="modified residue" description="N6,N6,N6-trimethyllysine" evidence="1">
    <location>
        <position position="14"/>
    </location>
</feature>
<feature type="non-terminal residue">
    <location>
        <position position="54"/>
    </location>
</feature>
<sequence length="54" mass="5880">MSPQTETKASVGFKAGVKDYKLNYYTPDYVTKDTDILAAFRVSPQPGVPPEEAG</sequence>
<accession>Q07049</accession>
<comment type="function">
    <text evidence="1">RuBisCO catalyzes two reactions: the carboxylation of D-ribulose 1,5-bisphosphate, the primary event in carbon dioxide fixation, as well as the oxidative fragmentation of the pentose substrate in the photorespiration process. Both reactions occur simultaneously and in competition at the same active site (By similarity).</text>
</comment>
<comment type="catalytic activity">
    <reaction>
        <text>2 (2R)-3-phosphoglycerate + 2 H(+) = D-ribulose 1,5-bisphosphate + CO2 + H2O</text>
        <dbReference type="Rhea" id="RHEA:23124"/>
        <dbReference type="ChEBI" id="CHEBI:15377"/>
        <dbReference type="ChEBI" id="CHEBI:15378"/>
        <dbReference type="ChEBI" id="CHEBI:16526"/>
        <dbReference type="ChEBI" id="CHEBI:57870"/>
        <dbReference type="ChEBI" id="CHEBI:58272"/>
        <dbReference type="EC" id="4.1.1.39"/>
    </reaction>
</comment>
<comment type="catalytic activity">
    <reaction>
        <text>D-ribulose 1,5-bisphosphate + O2 = 2-phosphoglycolate + (2R)-3-phosphoglycerate + 2 H(+)</text>
        <dbReference type="Rhea" id="RHEA:36631"/>
        <dbReference type="ChEBI" id="CHEBI:15378"/>
        <dbReference type="ChEBI" id="CHEBI:15379"/>
        <dbReference type="ChEBI" id="CHEBI:57870"/>
        <dbReference type="ChEBI" id="CHEBI:58033"/>
        <dbReference type="ChEBI" id="CHEBI:58272"/>
    </reaction>
</comment>
<comment type="subunit">
    <text evidence="1">Heterohexadecamer of 8 large chains and 8 small chains.</text>
</comment>
<comment type="subcellular location">
    <subcellularLocation>
        <location>Plastid</location>
        <location>Chloroplast</location>
    </subcellularLocation>
</comment>
<comment type="miscellaneous">
    <text evidence="1">The basic functional RuBisCO is composed of a large chain homodimer in a 'head-to-tail' conformation. In form I RuBisCO this homodimer is arranged in a barrel-like tetramer with the small subunits forming a tetrameric 'cap' on each end of the 'barrel' (By similarity).</text>
</comment>
<comment type="similarity">
    <text evidence="2">Belongs to the RuBisCO large chain family. Type I subfamily.</text>
</comment>
<name>RBL_ILEPE</name>